<name>MYC_ASTRU</name>
<accession>Q17103</accession>
<protein>
    <recommendedName>
        <fullName>Myc protein</fullName>
    </recommendedName>
    <alternativeName>
        <fullName>c-myc</fullName>
    </alternativeName>
</protein>
<feature type="chain" id="PRO_0000127321" description="Myc protein">
    <location>
        <begin position="1" status="less than"/>
        <end position="407"/>
    </location>
</feature>
<feature type="domain" description="bHLH" evidence="3">
    <location>
        <begin position="321"/>
        <end position="373"/>
    </location>
</feature>
<feature type="region of interest" description="Disordered" evidence="4">
    <location>
        <begin position="1"/>
        <end position="92"/>
    </location>
</feature>
<feature type="region of interest" description="Disordered" evidence="4">
    <location>
        <begin position="134"/>
        <end position="155"/>
    </location>
</feature>
<feature type="region of interest" description="Disordered" evidence="4">
    <location>
        <begin position="284"/>
        <end position="323"/>
    </location>
</feature>
<feature type="region of interest" description="Leucine-zipper">
    <location>
        <begin position="380"/>
        <end position="401"/>
    </location>
</feature>
<feature type="compositionally biased region" description="Acidic residues" evidence="4">
    <location>
        <begin position="1"/>
        <end position="16"/>
    </location>
</feature>
<feature type="compositionally biased region" description="Basic and acidic residues" evidence="4">
    <location>
        <begin position="58"/>
        <end position="74"/>
    </location>
</feature>
<feature type="compositionally biased region" description="Basic and acidic residues" evidence="4">
    <location>
        <begin position="134"/>
        <end position="144"/>
    </location>
</feature>
<feature type="compositionally biased region" description="Low complexity" evidence="4">
    <location>
        <begin position="285"/>
        <end position="306"/>
    </location>
</feature>
<feature type="non-terminal residue">
    <location>
        <position position="1"/>
    </location>
</feature>
<sequence length="407" mass="45673">ARVPDDDMNSLEDSDSMESCFAGEEEFYSSTLTPPTPSEDIWKKFELYPTPPLSPSHNPDDKESDRHPRHHQQDGDGSPSRSYQHLMDDDDLPLVNPQVPLLDLSSAPPIAALIQDCMWSSIIAEERRKLFMKSEKKHAEERATKKASTPSSGVMLPPLVPASEYGTSDCVDPSAVCPYPLSETRLDLFSSGTNTPSDSEEEIDVVTVEKKHHSVHKINTTRPYHKQSTKVRHQLHHRPISVALVGSLRGRPSTATILSIPIKKLKTEGNLEEVKQILQKSNLIRSSSGSSRGSSRGCSRNSSSRRVNQVSHPSSDSEDTEKRACHNVLERQRREDLRTSFLLLRDEVPELGTCDRAAKVVILKKATDYVSSLRDREETLRMDMATEKNRNLQLRRRLEALLAPLTL</sequence>
<dbReference type="EMBL" id="M80364">
    <property type="protein sequence ID" value="AAA27788.1"/>
    <property type="molecule type" value="mRNA"/>
</dbReference>
<dbReference type="PIR" id="S27774">
    <property type="entry name" value="S27774"/>
</dbReference>
<dbReference type="SMR" id="Q17103"/>
<dbReference type="OrthoDB" id="5964374at2759"/>
<dbReference type="GO" id="GO:0005634">
    <property type="term" value="C:nucleus"/>
    <property type="evidence" value="ECO:0007669"/>
    <property type="project" value="UniProtKB-SubCell"/>
</dbReference>
<dbReference type="GO" id="GO:0003677">
    <property type="term" value="F:DNA binding"/>
    <property type="evidence" value="ECO:0007669"/>
    <property type="project" value="UniProtKB-KW"/>
</dbReference>
<dbReference type="GO" id="GO:0000981">
    <property type="term" value="F:DNA-binding transcription factor activity, RNA polymerase II-specific"/>
    <property type="evidence" value="ECO:0000250"/>
    <property type="project" value="UniProtKB"/>
</dbReference>
<dbReference type="GO" id="GO:0046983">
    <property type="term" value="F:protein dimerization activity"/>
    <property type="evidence" value="ECO:0007669"/>
    <property type="project" value="InterPro"/>
</dbReference>
<dbReference type="CDD" id="cd11400">
    <property type="entry name" value="bHLHzip_Myc"/>
    <property type="match status" value="1"/>
</dbReference>
<dbReference type="FunFam" id="4.10.280.10:FF:000019">
    <property type="entry name" value="Myc proto-oncogene protein"/>
    <property type="match status" value="1"/>
</dbReference>
<dbReference type="Gene3D" id="4.10.280.10">
    <property type="entry name" value="Helix-loop-helix DNA-binding domain"/>
    <property type="match status" value="1"/>
</dbReference>
<dbReference type="InterPro" id="IPR011598">
    <property type="entry name" value="bHLH_dom"/>
</dbReference>
<dbReference type="InterPro" id="IPR036638">
    <property type="entry name" value="HLH_DNA-bd_sf"/>
</dbReference>
<dbReference type="InterPro" id="IPR050433">
    <property type="entry name" value="Myc_transcription_factors"/>
</dbReference>
<dbReference type="InterPro" id="IPR002418">
    <property type="entry name" value="Tscrpt_reg_Myc"/>
</dbReference>
<dbReference type="InterPro" id="IPR012682">
    <property type="entry name" value="Tscrpt_reg_Myc_N"/>
</dbReference>
<dbReference type="PANTHER" id="PTHR45851">
    <property type="entry name" value="MYC PROTO-ONCOGENE"/>
    <property type="match status" value="1"/>
</dbReference>
<dbReference type="Pfam" id="PF00010">
    <property type="entry name" value="HLH"/>
    <property type="match status" value="1"/>
</dbReference>
<dbReference type="Pfam" id="PF01056">
    <property type="entry name" value="Myc_N"/>
    <property type="match status" value="1"/>
</dbReference>
<dbReference type="PIRSF" id="PIRSF001705">
    <property type="entry name" value="Myc_protein"/>
    <property type="match status" value="1"/>
</dbReference>
<dbReference type="PRINTS" id="PR00044">
    <property type="entry name" value="LEUZIPPRMYC"/>
</dbReference>
<dbReference type="SMART" id="SM00353">
    <property type="entry name" value="HLH"/>
    <property type="match status" value="1"/>
</dbReference>
<dbReference type="SUPFAM" id="SSF47459">
    <property type="entry name" value="HLH, helix-loop-helix DNA-binding domain"/>
    <property type="match status" value="1"/>
</dbReference>
<dbReference type="PROSITE" id="PS50888">
    <property type="entry name" value="BHLH"/>
    <property type="match status" value="1"/>
</dbReference>
<gene>
    <name type="primary">MYC</name>
</gene>
<keyword id="KW-0010">Activator</keyword>
<keyword id="KW-0238">DNA-binding</keyword>
<keyword id="KW-0539">Nucleus</keyword>
<keyword id="KW-0804">Transcription</keyword>
<keyword id="KW-0805">Transcription regulation</keyword>
<proteinExistence type="evidence at transcript level"/>
<comment type="function">
    <text evidence="2">Transcription factor that binds DNA in a non-specific manner, yet also specifically recognizes the core sequence 5'-CAC[GA]TG-3'. Activates the transcription of growth-related genes.</text>
</comment>
<comment type="subunit">
    <text evidence="1">Efficient DNA binding requires dimerization with another bHLH protein.</text>
</comment>
<comment type="subcellular location">
    <subcellularLocation>
        <location>Nucleus</location>
    </subcellularLocation>
</comment>
<evidence type="ECO:0000250" key="1"/>
<evidence type="ECO:0000250" key="2">
    <source>
        <dbReference type="UniProtKB" id="P01106"/>
    </source>
</evidence>
<evidence type="ECO:0000255" key="3">
    <source>
        <dbReference type="PROSITE-ProRule" id="PRU00981"/>
    </source>
</evidence>
<evidence type="ECO:0000256" key="4">
    <source>
        <dbReference type="SAM" id="MobiDB-lite"/>
    </source>
</evidence>
<reference key="1">
    <citation type="journal article" date="1992" name="Oncogene">
        <title>First non-vertebrate member of the myc gene family is seasonally expressed in an invertebrate testis.</title>
        <authorList>
            <person name="Walker C.W."/>
            <person name="Boom J.D."/>
            <person name="Marsh A.G."/>
        </authorList>
    </citation>
    <scope>NUCLEOTIDE SEQUENCE [MRNA]</scope>
</reference>
<organism>
    <name type="scientific">Asterias rubens</name>
    <name type="common">Common European starfish</name>
    <name type="synonym">Asterias vulgaris</name>
    <dbReference type="NCBI Taxonomy" id="7604"/>
    <lineage>
        <taxon>Eukaryota</taxon>
        <taxon>Metazoa</taxon>
        <taxon>Echinodermata</taxon>
        <taxon>Eleutherozoa</taxon>
        <taxon>Asterozoa</taxon>
        <taxon>Asteroidea</taxon>
        <taxon>Forcipulatacea</taxon>
        <taxon>Forcipulatida</taxon>
        <taxon>Asteriidae</taxon>
        <taxon>Asterias</taxon>
    </lineage>
</organism>